<feature type="peptide" id="PRO_0000043514" description="Bradykinin-potentiating peptide 10b">
    <location>
        <begin position="1"/>
        <end position="10"/>
    </location>
</feature>
<feature type="peptide" id="PRO_0000292028" description="Bradykinin-potentiating peptide 10b-F">
    <location>
        <begin position="1"/>
        <end position="6"/>
    </location>
</feature>
<feature type="modified residue" description="Pyrrolidone carboxylic acid" evidence="1 2 3 4 5 6">
    <location>
        <position position="1"/>
    </location>
</feature>
<proteinExistence type="evidence at protein level"/>
<accession>P01022</accession>
<keyword id="KW-0903">Direct protein sequencing</keyword>
<keyword id="KW-0382">Hypotensive agent</keyword>
<keyword id="KW-0481">Metalloenzyme inhibitor</keyword>
<keyword id="KW-0483">Metalloprotease inhibitor</keyword>
<keyword id="KW-0646">Protease inhibitor</keyword>
<keyword id="KW-0873">Pyrrolidone carboxylic acid</keyword>
<keyword id="KW-0964">Secreted</keyword>
<keyword id="KW-0800">Toxin</keyword>
<protein>
    <recommendedName>
        <fullName>Bradykinin-potentiating peptide 10b</fullName>
        <shortName>BPP-10b</shortName>
    </recommendedName>
    <alternativeName>
        <fullName>Angiotensin-converting enzyme inhibitor V-6-II</fullName>
    </alternativeName>
    <alternativeName>
        <fullName>Bradykinin-potentiating peptide V-6-II</fullName>
    </alternativeName>
    <component>
        <recommendedName>
            <fullName>Bradykinin-potentiating peptide 10b-F</fullName>
            <shortName>BPP-10b-F</shortName>
        </recommendedName>
    </component>
</protein>
<organism>
    <name type="scientific">Bothrops jararaca</name>
    <name type="common">Jararaca</name>
    <name type="synonym">Bothrops jajaraca</name>
    <dbReference type="NCBI Taxonomy" id="8724"/>
    <lineage>
        <taxon>Eukaryota</taxon>
        <taxon>Metazoa</taxon>
        <taxon>Chordata</taxon>
        <taxon>Craniata</taxon>
        <taxon>Vertebrata</taxon>
        <taxon>Euteleostomi</taxon>
        <taxon>Lepidosauria</taxon>
        <taxon>Squamata</taxon>
        <taxon>Bifurcata</taxon>
        <taxon>Unidentata</taxon>
        <taxon>Episquamata</taxon>
        <taxon>Toxicofera</taxon>
        <taxon>Serpentes</taxon>
        <taxon>Colubroidea</taxon>
        <taxon>Viperidae</taxon>
        <taxon>Crotalinae</taxon>
        <taxon>Bothrops</taxon>
    </lineage>
</organism>
<comment type="function">
    <text evidence="1 3 6">This peptide both inhibits the activity of the angiotensin-converting enzyme (ACE) and enhances the action of bradykinin by inhibiting the peptidases that inactivate it. It acts as an indirect hypotensive agent. Bradykinin-potentiating peptide 10b-F has much lower activity than the full-length peptide.</text>
</comment>
<comment type="subcellular location">
    <subcellularLocation>
        <location evidence="1 2 3">Secreted</location>
    </subcellularLocation>
</comment>
<comment type="tissue specificity">
    <text evidence="1 2 3">Expressed by the venom gland.</text>
</comment>
<comment type="developmental stage">
    <text evidence="4">This protein seems to be found in both adult and newborn B.jararaca venoms.</text>
</comment>
<comment type="mass spectrometry" mass="1215.4" method="Electrospray" evidence="1 2">
    <molecule>Bradykinin-potentiating peptide 10b</molecule>
    <text>BPP-10b.</text>
</comment>
<comment type="mass spectrometry" mass="1215.49" method="MALDI" evidence="1 2">
    <molecule>Bradykinin-potentiating peptide 10b</molecule>
    <text>BPP-10b.</text>
</comment>
<comment type="mass spectrometry" mass="779.37" method="MALDI" evidence="3">
    <molecule>Bradykinin-potentiating peptide 10b-F</molecule>
    <text>BPP-10b-F.</text>
</comment>
<comment type="miscellaneous">
    <text evidence="8">Bradykinin-potentiating peptide 10b-F is present only in female snakes.</text>
</comment>
<comment type="similarity">
    <text evidence="7">Belongs to the bradykinin-potentiating peptide family.</text>
</comment>
<name>BPPAB_BOTJA</name>
<reference key="1">
    <citation type="journal article" date="1971" name="Biochemistry">
        <title>Angiotensin-converting enzyme inhibitors from the venom of Bothrops jararaca. Isolation, elucidation of structure, and synthesis.</title>
        <authorList>
            <person name="Ondetti M.A."/>
            <person name="Williams N.J."/>
            <person name="Sabo E.F."/>
            <person name="Pluscec J."/>
            <person name="Weaver E.R."/>
            <person name="Kocy O."/>
        </authorList>
    </citation>
    <scope>PROTEIN SEQUENCE (BPP-10B)</scope>
    <scope>FUNCTION</scope>
    <source>
        <tissue>Venom</tissue>
    </source>
</reference>
<reference key="2">
    <citation type="journal article" date="2004" name="Peptides">
        <title>Identification of five new bradykinin potentiating peptides (BPPs) from Bothrops jararaca crude venom by using electrospray ionization tandem mass spectrometry after a two-step liquid chromatography.</title>
        <authorList>
            <person name="Ianzer D."/>
            <person name="Konno K."/>
            <person name="Marques-Porto R."/>
            <person name="Portaro F.C.V."/>
            <person name="Stoecklin R."/>
            <person name="de Camargo A.C.M."/>
            <person name="Pimenta D.C."/>
        </authorList>
    </citation>
    <scope>PROTEIN SEQUENCE (BPP-10B)</scope>
    <scope>FUNCTION</scope>
    <scope>SUBCELLULAR LOCATION</scope>
    <scope>TISSUE SPECIFICITY</scope>
    <scope>MASS SPECTROMETRY</scope>
    <scope>PYROGLUTAMATE FORMATION AT GLN-1</scope>
    <source>
        <tissue>Venom</tissue>
    </source>
</reference>
<reference key="3">
    <citation type="journal article" date="2005" name="Rapid Commun. Mass Spectrom.">
        <title>Fast analysis of low molecular mass compounds present in snake venom: identification of ten new pyroglutamate-containing peptides.</title>
        <authorList>
            <person name="Wermelinger L.S."/>
            <person name="Dutra D.L."/>
            <person name="Oliveira-Carvalho A.L."/>
            <person name="Soares M.R."/>
            <person name="Bloch C. Jr."/>
            <person name="Zingali R.B."/>
        </authorList>
    </citation>
    <scope>PROTEIN SEQUENCE (BPP-10B)</scope>
    <scope>SUBCELLULAR LOCATION</scope>
    <scope>TISSUE SPECIFICITY</scope>
    <scope>MASS SPECTROMETRY</scope>
    <scope>PYROGLUTAMATE FORMATION AT GLN-1</scope>
    <source>
        <tissue>Venom</tissue>
    </source>
</reference>
<reference key="4">
    <citation type="journal article" date="2007" name="Rapid Commun. Mass Spectrom.">
        <title>Mass spectrometric analysis of the individual variability of Bothrops jararaca venom peptide fraction. Evidence for sex-based variation among the bradykinin-potentiating peptides.</title>
        <authorList>
            <person name="Pimenta D.C."/>
            <person name="Prezoto B.C."/>
            <person name="Konno K."/>
            <person name="de Melo R.L."/>
            <person name="Furtado M.F."/>
            <person name="de Camargo A.C.M."/>
            <person name="Serrano S.M.T."/>
        </authorList>
    </citation>
    <scope>PROTEIN SEQUENCE OF 1-6 (BPP-10B-F)</scope>
    <scope>FUNCTION</scope>
    <scope>SUBCELLULAR LOCATION</scope>
    <scope>TISSUE SPECIFICITY</scope>
    <scope>MASS SPECTROMETRY</scope>
    <scope>PYROGLUTAMATE FORMATION AT GLN-1</scope>
    <source>
        <tissue>Venom</tissue>
    </source>
</reference>
<reference key="5">
    <citation type="journal article" date="2012" name="Mol. Cell. Proteomics">
        <title>Peptidomics of three Bothrops snake venoms: insights into the molecular diversification of proteomes and peptidomes.</title>
        <authorList>
            <person name="Tashima A.K."/>
            <person name="Zelanis A."/>
            <person name="Kitano E.S."/>
            <person name="Ianzer D."/>
            <person name="Melo R.L."/>
            <person name="Rioli V."/>
            <person name="Sant'anna S.S."/>
            <person name="Schenberg A.C."/>
            <person name="Camargo A.C."/>
            <person name="Serrano S.M.T."/>
        </authorList>
    </citation>
    <scope>PROTEIN SEQUENCE (BPP-10B)</scope>
    <scope>PYROGLUTAMATE FORMATION AT GLN-1</scope>
    <scope>IDENTIFICATION BY MASS SPECTROMETRY</scope>
    <source>
        <tissue>Venom</tissue>
    </source>
</reference>
<reference key="6">
    <citation type="journal article" date="2010" name="J. Proteome Res.">
        <title>Analysis of the ontogenetic variation in the venom proteome/peptidome of Bothrops jararaca reveals different strategies to deal with prey.</title>
        <authorList>
            <person name="Zelanis A."/>
            <person name="Tashima A.K."/>
            <person name="Rocha M.M."/>
            <person name="Furtado M.F."/>
            <person name="Camargo A.C."/>
            <person name="Ho P.L."/>
            <person name="Serrano S.M."/>
        </authorList>
    </citation>
    <scope>PROTEIN SEQUENCE</scope>
    <scope>PYROGLUTAMATE FORMATION AT GLN-1</scope>
    <scope>DEVELOPMENTAL STAGE (BPP-10B)</scope>
    <scope>IDENTIFICATION BY MASS SPECTROMETRY</scope>
    <source>
        <tissue>Venom</tissue>
    </source>
</reference>
<evidence type="ECO:0000269" key="1">
    <source>
    </source>
</evidence>
<evidence type="ECO:0000269" key="2">
    <source>
    </source>
</evidence>
<evidence type="ECO:0000269" key="3">
    <source>
    </source>
</evidence>
<evidence type="ECO:0000269" key="4">
    <source>
    </source>
</evidence>
<evidence type="ECO:0000269" key="5">
    <source>
    </source>
</evidence>
<evidence type="ECO:0000269" key="6">
    <source>
    </source>
</evidence>
<evidence type="ECO:0000305" key="7"/>
<evidence type="ECO:0000305" key="8">
    <source>
    </source>
</evidence>
<sequence length="10" mass="1232">QNWPRPQIPP</sequence>
<dbReference type="PIR" id="A01255">
    <property type="entry name" value="XAVI6B"/>
</dbReference>
<dbReference type="GO" id="GO:0005576">
    <property type="term" value="C:extracellular region"/>
    <property type="evidence" value="ECO:0007669"/>
    <property type="project" value="UniProtKB-SubCell"/>
</dbReference>
<dbReference type="GO" id="GO:0030414">
    <property type="term" value="F:peptidase inhibitor activity"/>
    <property type="evidence" value="ECO:0007669"/>
    <property type="project" value="UniProtKB-KW"/>
</dbReference>
<dbReference type="GO" id="GO:0090729">
    <property type="term" value="F:toxin activity"/>
    <property type="evidence" value="ECO:0007669"/>
    <property type="project" value="UniProtKB-KW"/>
</dbReference>
<dbReference type="GO" id="GO:0008217">
    <property type="term" value="P:regulation of blood pressure"/>
    <property type="evidence" value="ECO:0007669"/>
    <property type="project" value="UniProtKB-KW"/>
</dbReference>